<reference key="1">
    <citation type="journal article" date="2009" name="Genome Res.">
        <title>Comparative genomic analyses of the human fungal pathogens Coccidioides and their relatives.</title>
        <authorList>
            <person name="Sharpton T.J."/>
            <person name="Stajich J.E."/>
            <person name="Rounsley S.D."/>
            <person name="Gardner M.J."/>
            <person name="Wortman J.R."/>
            <person name="Jordar V.S."/>
            <person name="Maiti R."/>
            <person name="Kodira C.D."/>
            <person name="Neafsey D.E."/>
            <person name="Zeng Q."/>
            <person name="Hung C.-Y."/>
            <person name="McMahan C."/>
            <person name="Muszewska A."/>
            <person name="Grynberg M."/>
            <person name="Mandel M.A."/>
            <person name="Kellner E.M."/>
            <person name="Barker B.M."/>
            <person name="Galgiani J.N."/>
            <person name="Orbach M.J."/>
            <person name="Kirkland T.N."/>
            <person name="Cole G.T."/>
            <person name="Henn M.R."/>
            <person name="Birren B.W."/>
            <person name="Taylor J.W."/>
        </authorList>
    </citation>
    <scope>NUCLEOTIDE SEQUENCE [LARGE SCALE GENOMIC DNA]</scope>
    <source>
        <strain>NAm1 / WU24</strain>
    </source>
</reference>
<organism>
    <name type="scientific">Ajellomyces capsulatus (strain NAm1 / WU24)</name>
    <name type="common">Darling's disease fungus</name>
    <name type="synonym">Histoplasma capsulatum</name>
    <dbReference type="NCBI Taxonomy" id="2059318"/>
    <lineage>
        <taxon>Eukaryota</taxon>
        <taxon>Fungi</taxon>
        <taxon>Dikarya</taxon>
        <taxon>Ascomycota</taxon>
        <taxon>Pezizomycotina</taxon>
        <taxon>Eurotiomycetes</taxon>
        <taxon>Eurotiomycetidae</taxon>
        <taxon>Onygenales</taxon>
        <taxon>Ajellomycetaceae</taxon>
        <taxon>Histoplasma</taxon>
    </lineage>
</organism>
<dbReference type="EMBL" id="CH476655">
    <property type="protein sequence ID" value="EDN02693.1"/>
    <property type="molecule type" value="Genomic_DNA"/>
</dbReference>
<dbReference type="SMR" id="A6QT51"/>
<dbReference type="STRING" id="339724.A6QT51"/>
<dbReference type="KEGG" id="aje:HCAG_00557"/>
<dbReference type="VEuPathDB" id="FungiDB:HCAG_00557"/>
<dbReference type="HOGENOM" id="CLU_045138_1_0_1"/>
<dbReference type="OMA" id="MVQIHDY"/>
<dbReference type="OrthoDB" id="10741at299071"/>
<dbReference type="Proteomes" id="UP000009297">
    <property type="component" value="Unassembled WGS sequence"/>
</dbReference>
<dbReference type="GO" id="GO:0032541">
    <property type="term" value="C:cortical endoplasmic reticulum"/>
    <property type="evidence" value="ECO:0007669"/>
    <property type="project" value="TreeGrafter"/>
</dbReference>
<dbReference type="GO" id="GO:0005829">
    <property type="term" value="C:cytosol"/>
    <property type="evidence" value="ECO:0007669"/>
    <property type="project" value="TreeGrafter"/>
</dbReference>
<dbReference type="GO" id="GO:0005789">
    <property type="term" value="C:endoplasmic reticulum membrane"/>
    <property type="evidence" value="ECO:0007669"/>
    <property type="project" value="UniProtKB-SubCell"/>
</dbReference>
<dbReference type="GO" id="GO:0005886">
    <property type="term" value="C:plasma membrane"/>
    <property type="evidence" value="ECO:0007669"/>
    <property type="project" value="TreeGrafter"/>
</dbReference>
<dbReference type="GO" id="GO:0046872">
    <property type="term" value="F:metal ion binding"/>
    <property type="evidence" value="ECO:0007669"/>
    <property type="project" value="UniProtKB-KW"/>
</dbReference>
<dbReference type="GO" id="GO:0008526">
    <property type="term" value="F:phosphatidylinositol transfer activity"/>
    <property type="evidence" value="ECO:0007669"/>
    <property type="project" value="InterPro"/>
</dbReference>
<dbReference type="GO" id="GO:0043001">
    <property type="term" value="P:Golgi to plasma membrane protein transport"/>
    <property type="evidence" value="ECO:0007669"/>
    <property type="project" value="TreeGrafter"/>
</dbReference>
<dbReference type="GO" id="GO:0017157">
    <property type="term" value="P:regulation of exocytosis"/>
    <property type="evidence" value="ECO:0007669"/>
    <property type="project" value="TreeGrafter"/>
</dbReference>
<dbReference type="CDD" id="cd00170">
    <property type="entry name" value="SEC14"/>
    <property type="match status" value="1"/>
</dbReference>
<dbReference type="FunFam" id="3.40.525.10:FF:000017">
    <property type="entry name" value="Phosphatidylinositol transfer protein sfh5"/>
    <property type="match status" value="1"/>
</dbReference>
<dbReference type="Gene3D" id="3.40.525.10">
    <property type="entry name" value="CRAL-TRIO lipid binding domain"/>
    <property type="match status" value="1"/>
</dbReference>
<dbReference type="InterPro" id="IPR001251">
    <property type="entry name" value="CRAL-TRIO_dom"/>
</dbReference>
<dbReference type="InterPro" id="IPR036865">
    <property type="entry name" value="CRAL-TRIO_dom_sf"/>
</dbReference>
<dbReference type="InterPro" id="IPR011074">
    <property type="entry name" value="CRAL/TRIO_N_dom"/>
</dbReference>
<dbReference type="InterPro" id="IPR036273">
    <property type="entry name" value="CRAL/TRIO_N_dom_sf"/>
</dbReference>
<dbReference type="InterPro" id="IPR042938">
    <property type="entry name" value="Sfh5"/>
</dbReference>
<dbReference type="PANTHER" id="PTHR47669">
    <property type="entry name" value="PHOSPHATIDYLINOSITOL TRANSFER PROTEIN SFH5"/>
    <property type="match status" value="1"/>
</dbReference>
<dbReference type="PANTHER" id="PTHR47669:SF1">
    <property type="entry name" value="PHOSPHATIDYLINOSITOL TRANSFER PROTEIN SFH5"/>
    <property type="match status" value="1"/>
</dbReference>
<dbReference type="Pfam" id="PF00650">
    <property type="entry name" value="CRAL_TRIO"/>
    <property type="match status" value="1"/>
</dbReference>
<dbReference type="Pfam" id="PF03765">
    <property type="entry name" value="CRAL_TRIO_N"/>
    <property type="match status" value="1"/>
</dbReference>
<dbReference type="SMART" id="SM00516">
    <property type="entry name" value="SEC14"/>
    <property type="match status" value="1"/>
</dbReference>
<dbReference type="SUPFAM" id="SSF52087">
    <property type="entry name" value="CRAL/TRIO domain"/>
    <property type="match status" value="1"/>
</dbReference>
<dbReference type="SUPFAM" id="SSF46938">
    <property type="entry name" value="CRAL/TRIO N-terminal domain"/>
    <property type="match status" value="1"/>
</dbReference>
<dbReference type="PROSITE" id="PS50191">
    <property type="entry name" value="CRAL_TRIO"/>
    <property type="match status" value="1"/>
</dbReference>
<evidence type="ECO:0000250" key="1">
    <source>
        <dbReference type="UniProtKB" id="A6ZQI5"/>
    </source>
</evidence>
<evidence type="ECO:0000250" key="2">
    <source>
        <dbReference type="UniProtKB" id="P47008"/>
    </source>
</evidence>
<evidence type="ECO:0000255" key="3">
    <source>
        <dbReference type="PROSITE-ProRule" id="PRU00056"/>
    </source>
</evidence>
<evidence type="ECO:0000256" key="4">
    <source>
        <dbReference type="SAM" id="MobiDB-lite"/>
    </source>
</evidence>
<evidence type="ECO:0000305" key="5"/>
<proteinExistence type="inferred from homology"/>
<gene>
    <name type="primary">SFH5</name>
    <name type="ORF">HCAG_00557</name>
</gene>
<accession>A6QT51</accession>
<protein>
    <recommendedName>
        <fullName>Phosphatidylinositol transfer protein SFH5</fullName>
        <shortName>PITP SFH5</shortName>
    </recommendedName>
</protein>
<comment type="function">
    <text evidence="2">Non-classical phosphatidylinositol (PtdIns) transfer protein (PITP), which exhibits PtdIns-binding/transfer activity in the absence of detectable PtdCho-binding/transfer activity. Regulates PtdIns(4,5)P2 homeostasis at the plasma membrane. Heme-binding protein that may play a role in organic oxidant-induced stress responses.</text>
</comment>
<comment type="catalytic activity">
    <reaction evidence="2">
        <text>a 1,2-diacyl-sn-glycero-3-phospho-(1D-myo-inositol)(in) = a 1,2-diacyl-sn-glycero-3-phospho-(1D-myo-inositol)(out)</text>
        <dbReference type="Rhea" id="RHEA:38691"/>
        <dbReference type="ChEBI" id="CHEBI:57880"/>
    </reaction>
    <physiologicalReaction direction="left-to-right" evidence="2">
        <dbReference type="Rhea" id="RHEA:38692"/>
    </physiologicalReaction>
</comment>
<comment type="cofactor">
    <cofactor evidence="1">
        <name>heme b</name>
        <dbReference type="ChEBI" id="CHEBI:60344"/>
    </cofactor>
</comment>
<comment type="subcellular location">
    <subcellularLocation>
        <location evidence="2">Cytoplasm</location>
    </subcellularLocation>
    <subcellularLocation>
        <location evidence="2">Endoplasmic reticulum membrane</location>
        <topology evidence="2">Peripheral membrane protein</topology>
    </subcellularLocation>
    <subcellularLocation>
        <location evidence="2">Microsome membrane</location>
        <topology evidence="2">Peripheral membrane protein</topology>
    </subcellularLocation>
</comment>
<comment type="similarity">
    <text evidence="5">Belongs to the SFH5 family.</text>
</comment>
<keyword id="KW-0963">Cytoplasm</keyword>
<keyword id="KW-0256">Endoplasmic reticulum</keyword>
<keyword id="KW-0349">Heme</keyword>
<keyword id="KW-0408">Iron</keyword>
<keyword id="KW-0445">Lipid transport</keyword>
<keyword id="KW-0472">Membrane</keyword>
<keyword id="KW-0479">Metal-binding</keyword>
<keyword id="KW-0492">Microsome</keyword>
<keyword id="KW-1185">Reference proteome</keyword>
<keyword id="KW-0813">Transport</keyword>
<sequence length="460" mass="49863">MSETEKPVQAAAAAAVAAAGTADVPAVEKDPETTQDKQQSATDNSTTKAPQDEKNKQTENPSTDAPPAAATAPTADPITSAQPPDVDAIEAQKDGQKKNGPGSENKPDETPVDTRPEYLSKNPALSEFFEKLASILKKADHNEMWGVTLKDSDDVPTVNVLIKFLRANEGNVKLAEEQLRKALEWRKKMNPLALAEKATYSSSKFQGLGYVANYKDQNQGKVVFTWNIYGSVKDANRTFGDVDEFIKWRVALMEMAVKDLKLSEATSVIDYSGEDPYQMIQVHDYQNVSFLRLNPTIKSATKQTIDVFSTAYPELLKEKFFVNVPALMGWVFTALKVFLSKNTIRKFHPITNGVNLAREFSFADELPKSYGGKADELAESARTVALRQDTPEPPPESAPPAQASPPTTETNGSAKEVAKTAAEDAKKAEAPVAADAPATISEPEKPAASSANETPSEVAK</sequence>
<feature type="chain" id="PRO_0000324965" description="Phosphatidylinositol transfer protein SFH5">
    <location>
        <begin position="1"/>
        <end position="460"/>
    </location>
</feature>
<feature type="domain" description="CRAL-TRIO" evidence="3">
    <location>
        <begin position="198"/>
        <end position="378"/>
    </location>
</feature>
<feature type="region of interest" description="Disordered" evidence="4">
    <location>
        <begin position="1"/>
        <end position="118"/>
    </location>
</feature>
<feature type="region of interest" description="Disordered" evidence="4">
    <location>
        <begin position="386"/>
        <end position="460"/>
    </location>
</feature>
<feature type="compositionally biased region" description="Low complexity" evidence="4">
    <location>
        <begin position="8"/>
        <end position="25"/>
    </location>
</feature>
<feature type="compositionally biased region" description="Basic and acidic residues" evidence="4">
    <location>
        <begin position="26"/>
        <end position="35"/>
    </location>
</feature>
<feature type="compositionally biased region" description="Polar residues" evidence="4">
    <location>
        <begin position="36"/>
        <end position="49"/>
    </location>
</feature>
<feature type="compositionally biased region" description="Low complexity" evidence="4">
    <location>
        <begin position="61"/>
        <end position="81"/>
    </location>
</feature>
<feature type="compositionally biased region" description="Basic and acidic residues" evidence="4">
    <location>
        <begin position="105"/>
        <end position="118"/>
    </location>
</feature>
<feature type="compositionally biased region" description="Low complexity" evidence="4">
    <location>
        <begin position="399"/>
        <end position="410"/>
    </location>
</feature>
<feature type="compositionally biased region" description="Basic and acidic residues" evidence="4">
    <location>
        <begin position="416"/>
        <end position="429"/>
    </location>
</feature>
<feature type="compositionally biased region" description="Low complexity" evidence="4">
    <location>
        <begin position="430"/>
        <end position="439"/>
    </location>
</feature>
<feature type="compositionally biased region" description="Polar residues" evidence="4">
    <location>
        <begin position="449"/>
        <end position="460"/>
    </location>
</feature>
<feature type="binding site" evidence="1">
    <location>
        <position position="229"/>
    </location>
    <ligand>
        <name>heme</name>
        <dbReference type="ChEBI" id="CHEBI:30413"/>
    </ligand>
</feature>
<feature type="binding site" evidence="1">
    <location>
        <position position="249"/>
    </location>
    <ligand>
        <name>heme</name>
        <dbReference type="ChEBI" id="CHEBI:30413"/>
    </ligand>
</feature>
<feature type="binding site" evidence="1">
    <location>
        <position position="283"/>
    </location>
    <ligand>
        <name>heme</name>
        <dbReference type="ChEBI" id="CHEBI:30413"/>
    </ligand>
</feature>
<feature type="binding site" description="proximal binding residue" evidence="1">
    <location>
        <position position="285"/>
    </location>
    <ligand>
        <name>heme</name>
        <dbReference type="ChEBI" id="CHEBI:30413"/>
    </ligand>
    <ligandPart>
        <name>Fe</name>
        <dbReference type="ChEBI" id="CHEBI:18248"/>
    </ligandPart>
</feature>
<feature type="binding site" evidence="1">
    <location>
        <position position="319"/>
    </location>
    <ligand>
        <name>heme</name>
        <dbReference type="ChEBI" id="CHEBI:30413"/>
    </ligand>
</feature>
<name>SFH5_AJECN</name>